<protein>
    <recommendedName>
        <fullName evidence="1">Large ribosomal subunit protein uL4</fullName>
    </recommendedName>
    <alternativeName>
        <fullName evidence="2">50S ribosomal protein L4</fullName>
    </alternativeName>
</protein>
<reference key="1">
    <citation type="journal article" date="2000" name="Nature">
        <title>The genome sequence of the thermoacidophilic scavenger Thermoplasma acidophilum.</title>
        <authorList>
            <person name="Ruepp A."/>
            <person name="Graml W."/>
            <person name="Santos-Martinez M.-L."/>
            <person name="Koretke K.K."/>
            <person name="Volker C."/>
            <person name="Mewes H.-W."/>
            <person name="Frishman D."/>
            <person name="Stocker S."/>
            <person name="Lupas A.N."/>
            <person name="Baumeister W."/>
        </authorList>
    </citation>
    <scope>NUCLEOTIDE SEQUENCE [LARGE SCALE GENOMIC DNA]</scope>
    <source>
        <strain>ATCC 25905 / DSM 1728 / JCM 9062 / NBRC 15155 / AMRC-C165</strain>
    </source>
</reference>
<dbReference type="EMBL" id="AL445067">
    <property type="protein sequence ID" value="CAC12394.1"/>
    <property type="molecule type" value="Genomic_DNA"/>
</dbReference>
<dbReference type="RefSeq" id="WP_010901678.1">
    <property type="nucleotide sequence ID" value="NC_002578.1"/>
</dbReference>
<dbReference type="SMR" id="Q9HIR0"/>
<dbReference type="FunCoup" id="Q9HIR0">
    <property type="interactions" value="171"/>
</dbReference>
<dbReference type="STRING" id="273075.gene:9572493"/>
<dbReference type="PaxDb" id="273075-Ta1270"/>
<dbReference type="EnsemblBacteria" id="CAC12394">
    <property type="protein sequence ID" value="CAC12394"/>
    <property type="gene ID" value="CAC12394"/>
</dbReference>
<dbReference type="KEGG" id="tac:Ta1270"/>
<dbReference type="eggNOG" id="arCOG04071">
    <property type="taxonomic scope" value="Archaea"/>
</dbReference>
<dbReference type="HOGENOM" id="CLU_026535_0_0_2"/>
<dbReference type="InParanoid" id="Q9HIR0"/>
<dbReference type="OrthoDB" id="10737at2157"/>
<dbReference type="Proteomes" id="UP000001024">
    <property type="component" value="Chromosome"/>
</dbReference>
<dbReference type="GO" id="GO:1990904">
    <property type="term" value="C:ribonucleoprotein complex"/>
    <property type="evidence" value="ECO:0007669"/>
    <property type="project" value="UniProtKB-KW"/>
</dbReference>
<dbReference type="GO" id="GO:0005840">
    <property type="term" value="C:ribosome"/>
    <property type="evidence" value="ECO:0007669"/>
    <property type="project" value="UniProtKB-KW"/>
</dbReference>
<dbReference type="GO" id="GO:0019843">
    <property type="term" value="F:rRNA binding"/>
    <property type="evidence" value="ECO:0007669"/>
    <property type="project" value="UniProtKB-UniRule"/>
</dbReference>
<dbReference type="GO" id="GO:0003735">
    <property type="term" value="F:structural constituent of ribosome"/>
    <property type="evidence" value="ECO:0007669"/>
    <property type="project" value="InterPro"/>
</dbReference>
<dbReference type="GO" id="GO:0006412">
    <property type="term" value="P:translation"/>
    <property type="evidence" value="ECO:0007669"/>
    <property type="project" value="UniProtKB-UniRule"/>
</dbReference>
<dbReference type="Gene3D" id="3.40.1370.10">
    <property type="match status" value="1"/>
</dbReference>
<dbReference type="HAMAP" id="MF_01328_A">
    <property type="entry name" value="Ribosomal_uL4_A"/>
    <property type="match status" value="1"/>
</dbReference>
<dbReference type="InterPro" id="IPR002136">
    <property type="entry name" value="Ribosomal_uL4"/>
</dbReference>
<dbReference type="InterPro" id="IPR023574">
    <property type="entry name" value="Ribosomal_uL4_dom_sf"/>
</dbReference>
<dbReference type="InterPro" id="IPR013000">
    <property type="entry name" value="Ribosomal_uL4_euk/arc_CS"/>
</dbReference>
<dbReference type="InterPro" id="IPR045240">
    <property type="entry name" value="Ribosomal_uL4_euk/arch"/>
</dbReference>
<dbReference type="InterPro" id="IPR019970">
    <property type="entry name" value="Ribosomall_uL4-arc"/>
</dbReference>
<dbReference type="NCBIfam" id="TIGR03672">
    <property type="entry name" value="rpl4p_arch"/>
    <property type="match status" value="1"/>
</dbReference>
<dbReference type="PANTHER" id="PTHR19431">
    <property type="entry name" value="60S RIBOSOMAL PROTEIN L4"/>
    <property type="match status" value="1"/>
</dbReference>
<dbReference type="Pfam" id="PF00573">
    <property type="entry name" value="Ribosomal_L4"/>
    <property type="match status" value="1"/>
</dbReference>
<dbReference type="SUPFAM" id="SSF52166">
    <property type="entry name" value="Ribosomal protein L4"/>
    <property type="match status" value="1"/>
</dbReference>
<dbReference type="PROSITE" id="PS00939">
    <property type="entry name" value="RIBOSOMAL_L1E"/>
    <property type="match status" value="1"/>
</dbReference>
<organism>
    <name type="scientific">Thermoplasma acidophilum (strain ATCC 25905 / DSM 1728 / JCM 9062 / NBRC 15155 / AMRC-C165)</name>
    <dbReference type="NCBI Taxonomy" id="273075"/>
    <lineage>
        <taxon>Archaea</taxon>
        <taxon>Methanobacteriati</taxon>
        <taxon>Thermoplasmatota</taxon>
        <taxon>Thermoplasmata</taxon>
        <taxon>Thermoplasmatales</taxon>
        <taxon>Thermoplasmataceae</taxon>
        <taxon>Thermoplasma</taxon>
    </lineage>
</organism>
<gene>
    <name evidence="1" type="primary">rpl4</name>
    <name type="ordered locus">Ta1270</name>
</gene>
<proteinExistence type="inferred from homology"/>
<evidence type="ECO:0000255" key="1">
    <source>
        <dbReference type="HAMAP-Rule" id="MF_01328"/>
    </source>
</evidence>
<evidence type="ECO:0000305" key="2"/>
<sequence length="255" mass="27819">MNTKVPIYSVSGEMKGEIDLPEVFDTEVREDIIRRAFRAISLSMRQPYGSSPLAGMRRVGHTTRPGLGISRMPRIAGGSRVVGIASAVGGKSAHSPRTTKNLYVKINDRERKMAKYSAIALTASVEAVKKRGHRFKEGLKLPIVVEDGVEGINKTKDAIALLKNLGVYEDIERSREGKHIRAGRGKMRGRRYKQPKSVLIVARNSSAMKAFRSLPGVDIASPNSLSIRKLAPGGVGGRLTIFTEGAIESLKEVDQ</sequence>
<feature type="chain" id="PRO_0000129346" description="Large ribosomal subunit protein uL4">
    <location>
        <begin position="1"/>
        <end position="255"/>
    </location>
</feature>
<keyword id="KW-1185">Reference proteome</keyword>
<keyword id="KW-0687">Ribonucleoprotein</keyword>
<keyword id="KW-0689">Ribosomal protein</keyword>
<keyword id="KW-0694">RNA-binding</keyword>
<keyword id="KW-0699">rRNA-binding</keyword>
<comment type="function">
    <text evidence="1">One of the primary rRNA binding proteins, this protein initially binds near the 5'-end of the 23S rRNA. It is important during the early stages of 50S assembly. It makes multiple contacts with different domains of the 23S rRNA in the assembled 50S subunit and ribosome.</text>
</comment>
<comment type="function">
    <text evidence="1">Forms part of the polypeptide exit tunnel.</text>
</comment>
<comment type="subunit">
    <text evidence="1">Part of the 50S ribosomal subunit.</text>
</comment>
<comment type="similarity">
    <text evidence="1">Belongs to the universal ribosomal protein uL4 family.</text>
</comment>
<accession>Q9HIR0</accession>
<name>RL4_THEAC</name>